<gene>
    <name evidence="1" type="primary">dapB</name>
    <name type="ordered locus">Reut_A2835</name>
</gene>
<keyword id="KW-0028">Amino-acid biosynthesis</keyword>
<keyword id="KW-0963">Cytoplasm</keyword>
<keyword id="KW-0220">Diaminopimelate biosynthesis</keyword>
<keyword id="KW-0457">Lysine biosynthesis</keyword>
<keyword id="KW-0520">NAD</keyword>
<keyword id="KW-0521">NADP</keyword>
<keyword id="KW-0560">Oxidoreductase</keyword>
<evidence type="ECO:0000255" key="1">
    <source>
        <dbReference type="HAMAP-Rule" id="MF_00102"/>
    </source>
</evidence>
<evidence type="ECO:0000305" key="2"/>
<comment type="function">
    <text evidence="1">Catalyzes the conversion of 4-hydroxy-tetrahydrodipicolinate (HTPA) to tetrahydrodipicolinate.</text>
</comment>
<comment type="catalytic activity">
    <reaction evidence="1">
        <text>(S)-2,3,4,5-tetrahydrodipicolinate + NAD(+) + H2O = (2S,4S)-4-hydroxy-2,3,4,5-tetrahydrodipicolinate + NADH + H(+)</text>
        <dbReference type="Rhea" id="RHEA:35323"/>
        <dbReference type="ChEBI" id="CHEBI:15377"/>
        <dbReference type="ChEBI" id="CHEBI:15378"/>
        <dbReference type="ChEBI" id="CHEBI:16845"/>
        <dbReference type="ChEBI" id="CHEBI:57540"/>
        <dbReference type="ChEBI" id="CHEBI:57945"/>
        <dbReference type="ChEBI" id="CHEBI:67139"/>
        <dbReference type="EC" id="1.17.1.8"/>
    </reaction>
</comment>
<comment type="catalytic activity">
    <reaction evidence="1">
        <text>(S)-2,3,4,5-tetrahydrodipicolinate + NADP(+) + H2O = (2S,4S)-4-hydroxy-2,3,4,5-tetrahydrodipicolinate + NADPH + H(+)</text>
        <dbReference type="Rhea" id="RHEA:35331"/>
        <dbReference type="ChEBI" id="CHEBI:15377"/>
        <dbReference type="ChEBI" id="CHEBI:15378"/>
        <dbReference type="ChEBI" id="CHEBI:16845"/>
        <dbReference type="ChEBI" id="CHEBI:57783"/>
        <dbReference type="ChEBI" id="CHEBI:58349"/>
        <dbReference type="ChEBI" id="CHEBI:67139"/>
        <dbReference type="EC" id="1.17.1.8"/>
    </reaction>
</comment>
<comment type="pathway">
    <text evidence="1">Amino-acid biosynthesis; L-lysine biosynthesis via DAP pathway; (S)-tetrahydrodipicolinate from L-aspartate: step 4/4.</text>
</comment>
<comment type="subcellular location">
    <subcellularLocation>
        <location evidence="1">Cytoplasm</location>
    </subcellularLocation>
</comment>
<comment type="similarity">
    <text evidence="1">Belongs to the DapB family.</text>
</comment>
<comment type="caution">
    <text evidence="2">Was originally thought to be a dihydrodipicolinate reductase (DHDPR), catalyzing the conversion of dihydrodipicolinate to tetrahydrodipicolinate. However, it was shown in E.coli that the substrate of the enzymatic reaction is not dihydrodipicolinate (DHDP) but in fact (2S,4S)-4-hydroxy-2,3,4,5-tetrahydrodipicolinic acid (HTPA), the product released by the DapA-catalyzed reaction.</text>
</comment>
<reference key="1">
    <citation type="journal article" date="2010" name="PLoS ONE">
        <title>The complete multipartite genome sequence of Cupriavidus necator JMP134, a versatile pollutant degrader.</title>
        <authorList>
            <person name="Lykidis A."/>
            <person name="Perez-Pantoja D."/>
            <person name="Ledger T."/>
            <person name="Mavromatis K."/>
            <person name="Anderson I.J."/>
            <person name="Ivanova N.N."/>
            <person name="Hooper S.D."/>
            <person name="Lapidus A."/>
            <person name="Lucas S."/>
            <person name="Gonzalez B."/>
            <person name="Kyrpides N.C."/>
        </authorList>
    </citation>
    <scope>NUCLEOTIDE SEQUENCE [LARGE SCALE GENOMIC DNA]</scope>
    <source>
        <strain>JMP134 / LMG 1197</strain>
    </source>
</reference>
<feature type="chain" id="PRO_0000228379" description="4-hydroxy-tetrahydrodipicolinate reductase">
    <location>
        <begin position="1"/>
        <end position="265"/>
    </location>
</feature>
<feature type="active site" description="Proton donor/acceptor" evidence="1">
    <location>
        <position position="153"/>
    </location>
</feature>
<feature type="active site" description="Proton donor" evidence="1">
    <location>
        <position position="157"/>
    </location>
</feature>
<feature type="binding site" evidence="1">
    <location>
        <begin position="7"/>
        <end position="12"/>
    </location>
    <ligand>
        <name>NAD(+)</name>
        <dbReference type="ChEBI" id="CHEBI:57540"/>
    </ligand>
</feature>
<feature type="binding site" evidence="1">
    <location>
        <position position="33"/>
    </location>
    <ligand>
        <name>NAD(+)</name>
        <dbReference type="ChEBI" id="CHEBI:57540"/>
    </ligand>
</feature>
<feature type="binding site" evidence="1">
    <location>
        <begin position="96"/>
        <end position="98"/>
    </location>
    <ligand>
        <name>NAD(+)</name>
        <dbReference type="ChEBI" id="CHEBI:57540"/>
    </ligand>
</feature>
<feature type="binding site" evidence="1">
    <location>
        <begin position="120"/>
        <end position="123"/>
    </location>
    <ligand>
        <name>NAD(+)</name>
        <dbReference type="ChEBI" id="CHEBI:57540"/>
    </ligand>
</feature>
<feature type="binding site" evidence="1">
    <location>
        <position position="154"/>
    </location>
    <ligand>
        <name>(S)-2,3,4,5-tetrahydrodipicolinate</name>
        <dbReference type="ChEBI" id="CHEBI:16845"/>
    </ligand>
</feature>
<feature type="binding site" evidence="1">
    <location>
        <begin position="163"/>
        <end position="164"/>
    </location>
    <ligand>
        <name>(S)-2,3,4,5-tetrahydrodipicolinate</name>
        <dbReference type="ChEBI" id="CHEBI:16845"/>
    </ligand>
</feature>
<protein>
    <recommendedName>
        <fullName evidence="1">4-hydroxy-tetrahydrodipicolinate reductase</fullName>
        <shortName evidence="1">HTPA reductase</shortName>
        <ecNumber evidence="1">1.17.1.8</ecNumber>
    </recommendedName>
</protein>
<name>DAPB_CUPPJ</name>
<organism>
    <name type="scientific">Cupriavidus pinatubonensis (strain JMP 134 / LMG 1197)</name>
    <name type="common">Cupriavidus necator (strain JMP 134)</name>
    <dbReference type="NCBI Taxonomy" id="264198"/>
    <lineage>
        <taxon>Bacteria</taxon>
        <taxon>Pseudomonadati</taxon>
        <taxon>Pseudomonadota</taxon>
        <taxon>Betaproteobacteria</taxon>
        <taxon>Burkholderiales</taxon>
        <taxon>Burkholderiaceae</taxon>
        <taxon>Cupriavidus</taxon>
    </lineage>
</organism>
<proteinExistence type="inferred from homology"/>
<sequence>MNIAIAGASGRMGRMLIEHILATEGVSLSGALDLPGSPALGQDAGLLLGRQTGVAITADLEAGLAGADCLIDFTRPEGTLAHLAVAKRLGVKMVIGTTGFDDAGKAALAEAAKSIGIVFAANMSVGVNATFKLLEVAAKLLSTGYDIEIIEAHHRFKVDAPSGTALKMGEVVAEALGRDLKTCAVYAREGHTGERDPNSIGFATVRGGDIVGDHTVMFAGIGERIEISHKSSSRQSYADGAVRAARFLADKPNGLFDMQDVLGLK</sequence>
<accession>Q46XD7</accession>
<dbReference type="EC" id="1.17.1.8" evidence="1"/>
<dbReference type="EMBL" id="CP000090">
    <property type="protein sequence ID" value="AAZ62196.1"/>
    <property type="molecule type" value="Genomic_DNA"/>
</dbReference>
<dbReference type="SMR" id="Q46XD7"/>
<dbReference type="STRING" id="264198.Reut_A2835"/>
<dbReference type="KEGG" id="reu:Reut_A2835"/>
<dbReference type="eggNOG" id="COG0289">
    <property type="taxonomic scope" value="Bacteria"/>
</dbReference>
<dbReference type="HOGENOM" id="CLU_047479_2_1_4"/>
<dbReference type="OrthoDB" id="9790352at2"/>
<dbReference type="UniPathway" id="UPA00034">
    <property type="reaction ID" value="UER00018"/>
</dbReference>
<dbReference type="GO" id="GO:0005829">
    <property type="term" value="C:cytosol"/>
    <property type="evidence" value="ECO:0007669"/>
    <property type="project" value="TreeGrafter"/>
</dbReference>
<dbReference type="GO" id="GO:0008839">
    <property type="term" value="F:4-hydroxy-tetrahydrodipicolinate reductase"/>
    <property type="evidence" value="ECO:0007669"/>
    <property type="project" value="UniProtKB-EC"/>
</dbReference>
<dbReference type="GO" id="GO:0051287">
    <property type="term" value="F:NAD binding"/>
    <property type="evidence" value="ECO:0007669"/>
    <property type="project" value="UniProtKB-UniRule"/>
</dbReference>
<dbReference type="GO" id="GO:0050661">
    <property type="term" value="F:NADP binding"/>
    <property type="evidence" value="ECO:0007669"/>
    <property type="project" value="UniProtKB-UniRule"/>
</dbReference>
<dbReference type="GO" id="GO:0016726">
    <property type="term" value="F:oxidoreductase activity, acting on CH or CH2 groups, NAD or NADP as acceptor"/>
    <property type="evidence" value="ECO:0007669"/>
    <property type="project" value="UniProtKB-UniRule"/>
</dbReference>
<dbReference type="GO" id="GO:0019877">
    <property type="term" value="P:diaminopimelate biosynthetic process"/>
    <property type="evidence" value="ECO:0007669"/>
    <property type="project" value="UniProtKB-UniRule"/>
</dbReference>
<dbReference type="GO" id="GO:0009089">
    <property type="term" value="P:lysine biosynthetic process via diaminopimelate"/>
    <property type="evidence" value="ECO:0007669"/>
    <property type="project" value="UniProtKB-UniRule"/>
</dbReference>
<dbReference type="CDD" id="cd02274">
    <property type="entry name" value="DHDPR_N"/>
    <property type="match status" value="1"/>
</dbReference>
<dbReference type="FunFam" id="3.30.360.10:FF:000004">
    <property type="entry name" value="4-hydroxy-tetrahydrodipicolinate reductase"/>
    <property type="match status" value="1"/>
</dbReference>
<dbReference type="FunFam" id="3.40.50.720:FF:000048">
    <property type="entry name" value="4-hydroxy-tetrahydrodipicolinate reductase"/>
    <property type="match status" value="1"/>
</dbReference>
<dbReference type="Gene3D" id="3.30.360.10">
    <property type="entry name" value="Dihydrodipicolinate Reductase, domain 2"/>
    <property type="match status" value="1"/>
</dbReference>
<dbReference type="Gene3D" id="3.40.50.720">
    <property type="entry name" value="NAD(P)-binding Rossmann-like Domain"/>
    <property type="match status" value="1"/>
</dbReference>
<dbReference type="HAMAP" id="MF_00102">
    <property type="entry name" value="DapB"/>
    <property type="match status" value="1"/>
</dbReference>
<dbReference type="InterPro" id="IPR022663">
    <property type="entry name" value="DapB_C"/>
</dbReference>
<dbReference type="InterPro" id="IPR000846">
    <property type="entry name" value="DapB_N"/>
</dbReference>
<dbReference type="InterPro" id="IPR022664">
    <property type="entry name" value="DapB_N_CS"/>
</dbReference>
<dbReference type="InterPro" id="IPR023940">
    <property type="entry name" value="DHDPR_bac"/>
</dbReference>
<dbReference type="InterPro" id="IPR036291">
    <property type="entry name" value="NAD(P)-bd_dom_sf"/>
</dbReference>
<dbReference type="NCBIfam" id="TIGR00036">
    <property type="entry name" value="dapB"/>
    <property type="match status" value="1"/>
</dbReference>
<dbReference type="PANTHER" id="PTHR20836:SF0">
    <property type="entry name" value="4-HYDROXY-TETRAHYDRODIPICOLINATE REDUCTASE 1, CHLOROPLASTIC-RELATED"/>
    <property type="match status" value="1"/>
</dbReference>
<dbReference type="PANTHER" id="PTHR20836">
    <property type="entry name" value="DIHYDRODIPICOLINATE REDUCTASE"/>
    <property type="match status" value="1"/>
</dbReference>
<dbReference type="Pfam" id="PF05173">
    <property type="entry name" value="DapB_C"/>
    <property type="match status" value="1"/>
</dbReference>
<dbReference type="Pfam" id="PF01113">
    <property type="entry name" value="DapB_N"/>
    <property type="match status" value="1"/>
</dbReference>
<dbReference type="PIRSF" id="PIRSF000161">
    <property type="entry name" value="DHPR"/>
    <property type="match status" value="1"/>
</dbReference>
<dbReference type="SUPFAM" id="SSF55347">
    <property type="entry name" value="Glyceraldehyde-3-phosphate dehydrogenase-like, C-terminal domain"/>
    <property type="match status" value="1"/>
</dbReference>
<dbReference type="SUPFAM" id="SSF51735">
    <property type="entry name" value="NAD(P)-binding Rossmann-fold domains"/>
    <property type="match status" value="1"/>
</dbReference>
<dbReference type="PROSITE" id="PS01298">
    <property type="entry name" value="DAPB"/>
    <property type="match status" value="1"/>
</dbReference>